<sequence length="629" mass="68789">MPEAVAAAVSPAAAAATAMCAEHREKLEHIERVTRNAGQEQRRVLEEILAQNAQAEYLRRLGVPGDAPGADEAFRRLAPLVTYEDILPDVLRIANGDTSPILSGKPVSEFLTSSGTSGGERKLMPTIEEEMERRSGLYSLLMPVMSRQVPGLDKGKAMYLYFVKSEWRTPGGLPARPVLTSFYRSRYFLERPHDPYTVYTSPDEAVLCEDAYQSMYAQLICGLVHRADVLRVGAVFASGFLRAIRFLEKHWPSLCRDIRAGELDGGVTDPAVRGAVGRVLRGADPALADAIEAECARPSWQGIIRRVWPSTKYIDVIVTGAMAQYIPTLEFYGGGLPLACTMYASSECYFGLNLNPMCKPSEVAYTLIPTMCYFEFLPVNSGANDVAAPEPDHRGLVDLVDVKLGHEYELVVTTYSGLYRYRVGDVLRVAGFKNAAPMFAFVRRKNVALSIDSDKTDEAELHAAVTEAVQHLAPFGASLVEYTSYADTATTIPGHYVLFWELRSPAGGTPVPASVFEDCCLAVEEGLNSVYRQCRAADRSIGPLEIRVVADGTFDKLMDYALSRGASINQYKAPRCVRPGPVVELLDGRVQATYFSPKCPKWCAGGNKQWISSGAAAKKTTTTCDSLAV</sequence>
<comment type="function">
    <text evidence="1">May catalyze the synthesis of indole-3-acetic acid (IAA)-amino acid conjugates, providing a mechanism for the plant to cope with the presence of excess auxin.</text>
</comment>
<comment type="tissue specificity">
    <text evidence="2">Expressed in flowers.</text>
</comment>
<comment type="induction">
    <text evidence="2">By auxin.</text>
</comment>
<comment type="similarity">
    <text evidence="3">Belongs to the IAA-amido conjugating enzyme family.</text>
</comment>
<evidence type="ECO:0000250" key="1"/>
<evidence type="ECO:0000269" key="2">
    <source>
    </source>
</evidence>
<evidence type="ECO:0000305" key="3"/>
<evidence type="ECO:0000312" key="4">
    <source>
        <dbReference type="EMBL" id="EEE64261.1"/>
    </source>
</evidence>
<proteinExistence type="evidence at transcript level"/>
<keyword id="KW-0436">Ligase</keyword>
<keyword id="KW-1185">Reference proteome</keyword>
<protein>
    <recommendedName>
        <fullName>Probable indole-3-acetic acid-amido synthetase GH3.4</fullName>
        <ecNumber>6.3.2.-</ecNumber>
    </recommendedName>
    <alternativeName>
        <fullName>Auxin-responsive GH3-like protein 4</fullName>
        <shortName>OsGH3-4</shortName>
    </alternativeName>
</protein>
<name>GH34_ORYSJ</name>
<gene>
    <name type="primary">GH3.4</name>
    <name type="ordered locus">Os05g0500900</name>
    <name type="ordered locus">LOC_Os05g42150</name>
    <name evidence="4" type="ORF">OsJ_19094</name>
    <name type="ORF">OSJNBa0017K09.2</name>
</gene>
<dbReference type="EC" id="6.3.2.-"/>
<dbReference type="EMBL" id="AC130597">
    <property type="protein sequence ID" value="AAU90225.1"/>
    <property type="molecule type" value="Genomic_DNA"/>
</dbReference>
<dbReference type="EMBL" id="AP008211">
    <property type="protein sequence ID" value="BAF17881.1"/>
    <property type="molecule type" value="Genomic_DNA"/>
</dbReference>
<dbReference type="EMBL" id="AP014961">
    <property type="protein sequence ID" value="BAS94761.1"/>
    <property type="molecule type" value="Genomic_DNA"/>
</dbReference>
<dbReference type="EMBL" id="CM000142">
    <property type="protein sequence ID" value="EEE64261.1"/>
    <property type="molecule type" value="Genomic_DNA"/>
</dbReference>
<dbReference type="EMBL" id="AK101932">
    <property type="status" value="NOT_ANNOTATED_CDS"/>
    <property type="molecule type" value="mRNA"/>
</dbReference>
<dbReference type="RefSeq" id="XP_015638110.1">
    <property type="nucleotide sequence ID" value="XM_015782624.1"/>
</dbReference>
<dbReference type="SMR" id="Q60EJ6"/>
<dbReference type="FunCoup" id="Q60EJ6">
    <property type="interactions" value="322"/>
</dbReference>
<dbReference type="STRING" id="39947.Q60EJ6"/>
<dbReference type="PaxDb" id="39947-Q60EJ6"/>
<dbReference type="EnsemblPlants" id="Os05t0500900-01">
    <property type="protein sequence ID" value="Os05t0500900-01"/>
    <property type="gene ID" value="Os05g0500900"/>
</dbReference>
<dbReference type="Gramene" id="Os05t0500900-01">
    <property type="protein sequence ID" value="Os05t0500900-01"/>
    <property type="gene ID" value="Os05g0500900"/>
</dbReference>
<dbReference type="KEGG" id="dosa:Os05g0500900"/>
<dbReference type="eggNOG" id="ENOG502QQAN">
    <property type="taxonomic scope" value="Eukaryota"/>
</dbReference>
<dbReference type="HOGENOM" id="CLU_016249_2_1_1"/>
<dbReference type="InParanoid" id="Q60EJ6"/>
<dbReference type="OMA" id="PRWTAGH"/>
<dbReference type="OrthoDB" id="10004661at2759"/>
<dbReference type="Proteomes" id="UP000000763">
    <property type="component" value="Chromosome 5"/>
</dbReference>
<dbReference type="Proteomes" id="UP000007752">
    <property type="component" value="Chromosome 5"/>
</dbReference>
<dbReference type="Proteomes" id="UP000059680">
    <property type="component" value="Chromosome 5"/>
</dbReference>
<dbReference type="GO" id="GO:0005737">
    <property type="term" value="C:cytoplasm"/>
    <property type="evidence" value="ECO:0000318"/>
    <property type="project" value="GO_Central"/>
</dbReference>
<dbReference type="GO" id="GO:0016881">
    <property type="term" value="F:acid-amino acid ligase activity"/>
    <property type="evidence" value="ECO:0000318"/>
    <property type="project" value="GO_Central"/>
</dbReference>
<dbReference type="GO" id="GO:0009733">
    <property type="term" value="P:response to auxin"/>
    <property type="evidence" value="ECO:0000305"/>
    <property type="project" value="Gramene"/>
</dbReference>
<dbReference type="GO" id="GO:0009416">
    <property type="term" value="P:response to light stimulus"/>
    <property type="evidence" value="ECO:0000305"/>
    <property type="project" value="Gramene"/>
</dbReference>
<dbReference type="InterPro" id="IPR004993">
    <property type="entry name" value="GH3"/>
</dbReference>
<dbReference type="InterPro" id="IPR055378">
    <property type="entry name" value="GH3_C"/>
</dbReference>
<dbReference type="InterPro" id="IPR055377">
    <property type="entry name" value="GH3_M"/>
</dbReference>
<dbReference type="PANTHER" id="PTHR31901">
    <property type="entry name" value="GH3 DOMAIN-CONTAINING PROTEIN"/>
    <property type="match status" value="1"/>
</dbReference>
<dbReference type="PANTHER" id="PTHR31901:SF35">
    <property type="entry name" value="INDOLE-3-ACETIC ACID-AMIDO SYNTHETASE GH3.4-RELATED"/>
    <property type="match status" value="1"/>
</dbReference>
<dbReference type="Pfam" id="PF03321">
    <property type="entry name" value="GH3"/>
    <property type="match status" value="1"/>
</dbReference>
<dbReference type="Pfam" id="PF23572">
    <property type="entry name" value="GH3_C"/>
    <property type="match status" value="1"/>
</dbReference>
<dbReference type="Pfam" id="PF23571">
    <property type="entry name" value="GH3_M"/>
    <property type="match status" value="1"/>
</dbReference>
<organism>
    <name type="scientific">Oryza sativa subsp. japonica</name>
    <name type="common">Rice</name>
    <dbReference type="NCBI Taxonomy" id="39947"/>
    <lineage>
        <taxon>Eukaryota</taxon>
        <taxon>Viridiplantae</taxon>
        <taxon>Streptophyta</taxon>
        <taxon>Embryophyta</taxon>
        <taxon>Tracheophyta</taxon>
        <taxon>Spermatophyta</taxon>
        <taxon>Magnoliopsida</taxon>
        <taxon>Liliopsida</taxon>
        <taxon>Poales</taxon>
        <taxon>Poaceae</taxon>
        <taxon>BOP clade</taxon>
        <taxon>Oryzoideae</taxon>
        <taxon>Oryzeae</taxon>
        <taxon>Oryzinae</taxon>
        <taxon>Oryza</taxon>
        <taxon>Oryza sativa</taxon>
    </lineage>
</organism>
<feature type="chain" id="PRO_0000203581" description="Probable indole-3-acetic acid-amido synthetase GH3.4">
    <location>
        <begin position="1"/>
        <end position="629"/>
    </location>
</feature>
<feature type="sequence conflict" description="In Ref. 6; AK101932." evidence="3" ref="6">
    <original>V</original>
    <variation>A</variation>
    <location>
        <position position="447"/>
    </location>
</feature>
<accession>Q60EJ6</accession>
<accession>Q0DGZ2</accession>
<reference key="1">
    <citation type="journal article" date="2005" name="Mol. Genet. Genomics">
        <title>A fine physical map of the rice chromosome 5.</title>
        <authorList>
            <person name="Cheng C.-H."/>
            <person name="Chung M.C."/>
            <person name="Liu S.-M."/>
            <person name="Chen S.-K."/>
            <person name="Kao F.Y."/>
            <person name="Lin S.-J."/>
            <person name="Hsiao S.-H."/>
            <person name="Tseng I.C."/>
            <person name="Hsing Y.-I.C."/>
            <person name="Wu H.-P."/>
            <person name="Chen C.-S."/>
            <person name="Shaw J.-F."/>
            <person name="Wu J."/>
            <person name="Matsumoto T."/>
            <person name="Sasaki T."/>
            <person name="Chen H.-C."/>
            <person name="Chow T.-Y."/>
        </authorList>
    </citation>
    <scope>NUCLEOTIDE SEQUENCE [LARGE SCALE GENOMIC DNA]</scope>
    <source>
        <strain>cv. Nipponbare</strain>
    </source>
</reference>
<reference key="2">
    <citation type="journal article" date="2005" name="Nature">
        <title>The map-based sequence of the rice genome.</title>
        <authorList>
            <consortium name="International rice genome sequencing project (IRGSP)"/>
        </authorList>
    </citation>
    <scope>NUCLEOTIDE SEQUENCE [LARGE SCALE GENOMIC DNA]</scope>
    <source>
        <strain>cv. Nipponbare</strain>
    </source>
</reference>
<reference key="3">
    <citation type="journal article" date="2008" name="Nucleic Acids Res.">
        <title>The rice annotation project database (RAP-DB): 2008 update.</title>
        <authorList>
            <consortium name="The rice annotation project (RAP)"/>
        </authorList>
    </citation>
    <scope>GENOME REANNOTATION</scope>
    <source>
        <strain>cv. Nipponbare</strain>
    </source>
</reference>
<reference key="4">
    <citation type="journal article" date="2013" name="Rice">
        <title>Improvement of the Oryza sativa Nipponbare reference genome using next generation sequence and optical map data.</title>
        <authorList>
            <person name="Kawahara Y."/>
            <person name="de la Bastide M."/>
            <person name="Hamilton J.P."/>
            <person name="Kanamori H."/>
            <person name="McCombie W.R."/>
            <person name="Ouyang S."/>
            <person name="Schwartz D.C."/>
            <person name="Tanaka T."/>
            <person name="Wu J."/>
            <person name="Zhou S."/>
            <person name="Childs K.L."/>
            <person name="Davidson R.M."/>
            <person name="Lin H."/>
            <person name="Quesada-Ocampo L."/>
            <person name="Vaillancourt B."/>
            <person name="Sakai H."/>
            <person name="Lee S.S."/>
            <person name="Kim J."/>
            <person name="Numa H."/>
            <person name="Itoh T."/>
            <person name="Buell C.R."/>
            <person name="Matsumoto T."/>
        </authorList>
    </citation>
    <scope>GENOME REANNOTATION</scope>
    <source>
        <strain>cv. Nipponbare</strain>
    </source>
</reference>
<reference key="5">
    <citation type="journal article" date="2005" name="PLoS Biol.">
        <title>The genomes of Oryza sativa: a history of duplications.</title>
        <authorList>
            <person name="Yu J."/>
            <person name="Wang J."/>
            <person name="Lin W."/>
            <person name="Li S."/>
            <person name="Li H."/>
            <person name="Zhou J."/>
            <person name="Ni P."/>
            <person name="Dong W."/>
            <person name="Hu S."/>
            <person name="Zeng C."/>
            <person name="Zhang J."/>
            <person name="Zhang Y."/>
            <person name="Li R."/>
            <person name="Xu Z."/>
            <person name="Li S."/>
            <person name="Li X."/>
            <person name="Zheng H."/>
            <person name="Cong L."/>
            <person name="Lin L."/>
            <person name="Yin J."/>
            <person name="Geng J."/>
            <person name="Li G."/>
            <person name="Shi J."/>
            <person name="Liu J."/>
            <person name="Lv H."/>
            <person name="Li J."/>
            <person name="Wang J."/>
            <person name="Deng Y."/>
            <person name="Ran L."/>
            <person name="Shi X."/>
            <person name="Wang X."/>
            <person name="Wu Q."/>
            <person name="Li C."/>
            <person name="Ren X."/>
            <person name="Wang J."/>
            <person name="Wang X."/>
            <person name="Li D."/>
            <person name="Liu D."/>
            <person name="Zhang X."/>
            <person name="Ji Z."/>
            <person name="Zhao W."/>
            <person name="Sun Y."/>
            <person name="Zhang Z."/>
            <person name="Bao J."/>
            <person name="Han Y."/>
            <person name="Dong L."/>
            <person name="Ji J."/>
            <person name="Chen P."/>
            <person name="Wu S."/>
            <person name="Liu J."/>
            <person name="Xiao Y."/>
            <person name="Bu D."/>
            <person name="Tan J."/>
            <person name="Yang L."/>
            <person name="Ye C."/>
            <person name="Zhang J."/>
            <person name="Xu J."/>
            <person name="Zhou Y."/>
            <person name="Yu Y."/>
            <person name="Zhang B."/>
            <person name="Zhuang S."/>
            <person name="Wei H."/>
            <person name="Liu B."/>
            <person name="Lei M."/>
            <person name="Yu H."/>
            <person name="Li Y."/>
            <person name="Xu H."/>
            <person name="Wei S."/>
            <person name="He X."/>
            <person name="Fang L."/>
            <person name="Zhang Z."/>
            <person name="Zhang Y."/>
            <person name="Huang X."/>
            <person name="Su Z."/>
            <person name="Tong W."/>
            <person name="Li J."/>
            <person name="Tong Z."/>
            <person name="Li S."/>
            <person name="Ye J."/>
            <person name="Wang L."/>
            <person name="Fang L."/>
            <person name="Lei T."/>
            <person name="Chen C.-S."/>
            <person name="Chen H.-C."/>
            <person name="Xu Z."/>
            <person name="Li H."/>
            <person name="Huang H."/>
            <person name="Zhang F."/>
            <person name="Xu H."/>
            <person name="Li N."/>
            <person name="Zhao C."/>
            <person name="Li S."/>
            <person name="Dong L."/>
            <person name="Huang Y."/>
            <person name="Li L."/>
            <person name="Xi Y."/>
            <person name="Qi Q."/>
            <person name="Li W."/>
            <person name="Zhang B."/>
            <person name="Hu W."/>
            <person name="Zhang Y."/>
            <person name="Tian X."/>
            <person name="Jiao Y."/>
            <person name="Liang X."/>
            <person name="Jin J."/>
            <person name="Gao L."/>
            <person name="Zheng W."/>
            <person name="Hao B."/>
            <person name="Liu S.-M."/>
            <person name="Wang W."/>
            <person name="Yuan L."/>
            <person name="Cao M."/>
            <person name="McDermott J."/>
            <person name="Samudrala R."/>
            <person name="Wang J."/>
            <person name="Wong G.K.-S."/>
            <person name="Yang H."/>
        </authorList>
    </citation>
    <scope>NUCLEOTIDE SEQUENCE [LARGE SCALE GENOMIC DNA]</scope>
    <source>
        <strain>cv. Nipponbare</strain>
    </source>
</reference>
<reference key="6">
    <citation type="journal article" date="2003" name="Science">
        <title>Collection, mapping, and annotation of over 28,000 cDNA clones from japonica rice.</title>
        <authorList>
            <consortium name="The rice full-length cDNA consortium"/>
        </authorList>
    </citation>
    <scope>NUCLEOTIDE SEQUENCE [LARGE SCALE MRNA]</scope>
    <source>
        <strain>cv. Nipponbare</strain>
    </source>
</reference>
<reference key="7">
    <citation type="journal article" date="2006" name="Funct. Integr. Genomics">
        <title>The auxin-responsive GH3 gene family in rice (Oryza sativa).</title>
        <authorList>
            <person name="Jain M."/>
            <person name="Kaur N."/>
            <person name="Tyagi A.K."/>
            <person name="Khurana J.P."/>
        </authorList>
    </citation>
    <scope>TISSUE SPECIFICITY</scope>
    <scope>INDUCTION</scope>
    <scope>NOMENCLATURE</scope>
</reference>